<evidence type="ECO:0000255" key="1">
    <source>
        <dbReference type="HAMAP-Rule" id="MF_01366"/>
    </source>
</evidence>
<evidence type="ECO:0000305" key="2"/>
<reference key="1">
    <citation type="journal article" date="2005" name="PLoS Genet.">
        <title>Life in hot carbon monoxide: the complete genome sequence of Carboxydothermus hydrogenoformans Z-2901.</title>
        <authorList>
            <person name="Wu M."/>
            <person name="Ren Q."/>
            <person name="Durkin A.S."/>
            <person name="Daugherty S.C."/>
            <person name="Brinkac L.M."/>
            <person name="Dodson R.J."/>
            <person name="Madupu R."/>
            <person name="Sullivan S.A."/>
            <person name="Kolonay J.F."/>
            <person name="Nelson W.C."/>
            <person name="Tallon L.J."/>
            <person name="Jones K.M."/>
            <person name="Ulrich L.E."/>
            <person name="Gonzalez J.M."/>
            <person name="Zhulin I.B."/>
            <person name="Robb F.T."/>
            <person name="Eisen J.A."/>
        </authorList>
    </citation>
    <scope>NUCLEOTIDE SEQUENCE [LARGE SCALE GENOMIC DNA]</scope>
    <source>
        <strain>ATCC BAA-161 / DSM 6008 / Z-2901</strain>
    </source>
</reference>
<keyword id="KW-1185">Reference proteome</keyword>
<keyword id="KW-0687">Ribonucleoprotein</keyword>
<keyword id="KW-0689">Ribosomal protein</keyword>
<accession>Q3A9V1</accession>
<sequence>MRTTYMAKPNEVERKWYVIDAAGKPLGRVASEAAKLLRGKHKPEFTPHVDTGDFVIIINAEKAVLTGKKLEKKMFYRHSRYPGGLKAIPYGILMKTNPVLAFEKAVKGMLPHNRLGRKLFKKLKVYAGESHPHQAQKPEIWQF</sequence>
<comment type="function">
    <text evidence="1">This protein is one of the early assembly proteins of the 50S ribosomal subunit, although it is not seen to bind rRNA by itself. It is important during the early stages of 50S assembly.</text>
</comment>
<comment type="subunit">
    <text evidence="1">Part of the 50S ribosomal subunit.</text>
</comment>
<comment type="similarity">
    <text evidence="1">Belongs to the universal ribosomal protein uL13 family.</text>
</comment>
<name>RL13_CARHZ</name>
<proteinExistence type="inferred from homology"/>
<gene>
    <name evidence="1" type="primary">rplM</name>
    <name type="ordered locus">CHY_2274</name>
</gene>
<protein>
    <recommendedName>
        <fullName evidence="1">Large ribosomal subunit protein uL13</fullName>
    </recommendedName>
    <alternativeName>
        <fullName evidence="2">50S ribosomal protein L13</fullName>
    </alternativeName>
</protein>
<organism>
    <name type="scientific">Carboxydothermus hydrogenoformans (strain ATCC BAA-161 / DSM 6008 / Z-2901)</name>
    <dbReference type="NCBI Taxonomy" id="246194"/>
    <lineage>
        <taxon>Bacteria</taxon>
        <taxon>Bacillati</taxon>
        <taxon>Bacillota</taxon>
        <taxon>Clostridia</taxon>
        <taxon>Thermoanaerobacterales</taxon>
        <taxon>Thermoanaerobacteraceae</taxon>
        <taxon>Carboxydothermus</taxon>
    </lineage>
</organism>
<dbReference type="EMBL" id="CP000141">
    <property type="protein sequence ID" value="ABB14646.1"/>
    <property type="molecule type" value="Genomic_DNA"/>
</dbReference>
<dbReference type="SMR" id="Q3A9V1"/>
<dbReference type="FunCoup" id="Q3A9V1">
    <property type="interactions" value="459"/>
</dbReference>
<dbReference type="STRING" id="246194.CHY_2274"/>
<dbReference type="KEGG" id="chy:CHY_2274"/>
<dbReference type="eggNOG" id="COG0102">
    <property type="taxonomic scope" value="Bacteria"/>
</dbReference>
<dbReference type="HOGENOM" id="CLU_082184_2_2_9"/>
<dbReference type="InParanoid" id="Q3A9V1"/>
<dbReference type="OrthoDB" id="9801330at2"/>
<dbReference type="Proteomes" id="UP000002706">
    <property type="component" value="Chromosome"/>
</dbReference>
<dbReference type="GO" id="GO:0022625">
    <property type="term" value="C:cytosolic large ribosomal subunit"/>
    <property type="evidence" value="ECO:0007669"/>
    <property type="project" value="TreeGrafter"/>
</dbReference>
<dbReference type="GO" id="GO:0003729">
    <property type="term" value="F:mRNA binding"/>
    <property type="evidence" value="ECO:0007669"/>
    <property type="project" value="TreeGrafter"/>
</dbReference>
<dbReference type="GO" id="GO:0003735">
    <property type="term" value="F:structural constituent of ribosome"/>
    <property type="evidence" value="ECO:0007669"/>
    <property type="project" value="InterPro"/>
</dbReference>
<dbReference type="GO" id="GO:0017148">
    <property type="term" value="P:negative regulation of translation"/>
    <property type="evidence" value="ECO:0007669"/>
    <property type="project" value="TreeGrafter"/>
</dbReference>
<dbReference type="GO" id="GO:0006412">
    <property type="term" value="P:translation"/>
    <property type="evidence" value="ECO:0007669"/>
    <property type="project" value="UniProtKB-UniRule"/>
</dbReference>
<dbReference type="CDD" id="cd00392">
    <property type="entry name" value="Ribosomal_L13"/>
    <property type="match status" value="1"/>
</dbReference>
<dbReference type="FunFam" id="3.90.1180.10:FF:000001">
    <property type="entry name" value="50S ribosomal protein L13"/>
    <property type="match status" value="1"/>
</dbReference>
<dbReference type="Gene3D" id="3.90.1180.10">
    <property type="entry name" value="Ribosomal protein L13"/>
    <property type="match status" value="1"/>
</dbReference>
<dbReference type="HAMAP" id="MF_01366">
    <property type="entry name" value="Ribosomal_uL13"/>
    <property type="match status" value="1"/>
</dbReference>
<dbReference type="InterPro" id="IPR005822">
    <property type="entry name" value="Ribosomal_uL13"/>
</dbReference>
<dbReference type="InterPro" id="IPR005823">
    <property type="entry name" value="Ribosomal_uL13_bac-type"/>
</dbReference>
<dbReference type="InterPro" id="IPR023563">
    <property type="entry name" value="Ribosomal_uL13_CS"/>
</dbReference>
<dbReference type="InterPro" id="IPR036899">
    <property type="entry name" value="Ribosomal_uL13_sf"/>
</dbReference>
<dbReference type="NCBIfam" id="TIGR01066">
    <property type="entry name" value="rplM_bact"/>
    <property type="match status" value="1"/>
</dbReference>
<dbReference type="PANTHER" id="PTHR11545:SF2">
    <property type="entry name" value="LARGE RIBOSOMAL SUBUNIT PROTEIN UL13M"/>
    <property type="match status" value="1"/>
</dbReference>
<dbReference type="PANTHER" id="PTHR11545">
    <property type="entry name" value="RIBOSOMAL PROTEIN L13"/>
    <property type="match status" value="1"/>
</dbReference>
<dbReference type="Pfam" id="PF00572">
    <property type="entry name" value="Ribosomal_L13"/>
    <property type="match status" value="1"/>
</dbReference>
<dbReference type="PIRSF" id="PIRSF002181">
    <property type="entry name" value="Ribosomal_L13"/>
    <property type="match status" value="1"/>
</dbReference>
<dbReference type="SUPFAM" id="SSF52161">
    <property type="entry name" value="Ribosomal protein L13"/>
    <property type="match status" value="1"/>
</dbReference>
<dbReference type="PROSITE" id="PS00783">
    <property type="entry name" value="RIBOSOMAL_L13"/>
    <property type="match status" value="1"/>
</dbReference>
<feature type="chain" id="PRO_0000261706" description="Large ribosomal subunit protein uL13">
    <location>
        <begin position="1"/>
        <end position="143"/>
    </location>
</feature>